<comment type="function">
    <text evidence="1">Increases the formation of ribosomal termination complexes and stimulates activities of RF-1 and RF-2. It binds guanine nucleotides and has strong preference for UGA stop codons. It may interact directly with the ribosome. The stimulation of RF-1 and RF-2 is significantly reduced by GTP and GDP, but not by GMP.</text>
</comment>
<comment type="subcellular location">
    <subcellularLocation>
        <location evidence="1">Cytoplasm</location>
    </subcellularLocation>
</comment>
<comment type="similarity">
    <text evidence="1">Belongs to the TRAFAC class translation factor GTPase superfamily. Classic translation factor GTPase family. PrfC subfamily.</text>
</comment>
<keyword id="KW-0963">Cytoplasm</keyword>
<keyword id="KW-0342">GTP-binding</keyword>
<keyword id="KW-0547">Nucleotide-binding</keyword>
<keyword id="KW-0648">Protein biosynthesis</keyword>
<proteinExistence type="inferred from homology"/>
<evidence type="ECO:0000255" key="1">
    <source>
        <dbReference type="HAMAP-Rule" id="MF_00072"/>
    </source>
</evidence>
<accession>A4Y9B3</accession>
<feature type="chain" id="PRO_1000023677" description="Peptide chain release factor 3">
    <location>
        <begin position="1"/>
        <end position="526"/>
    </location>
</feature>
<feature type="domain" description="tr-type G">
    <location>
        <begin position="9"/>
        <end position="277"/>
    </location>
</feature>
<feature type="binding site" evidence="1">
    <location>
        <begin position="18"/>
        <end position="25"/>
    </location>
    <ligand>
        <name>GTP</name>
        <dbReference type="ChEBI" id="CHEBI:37565"/>
    </ligand>
</feature>
<feature type="binding site" evidence="1">
    <location>
        <begin position="86"/>
        <end position="90"/>
    </location>
    <ligand>
        <name>GTP</name>
        <dbReference type="ChEBI" id="CHEBI:37565"/>
    </ligand>
</feature>
<feature type="binding site" evidence="1">
    <location>
        <begin position="140"/>
        <end position="143"/>
    </location>
    <ligand>
        <name>GTP</name>
        <dbReference type="ChEBI" id="CHEBI:37565"/>
    </ligand>
</feature>
<gene>
    <name evidence="1" type="primary">prfC</name>
    <name type="ordered locus">Sputcn32_2827</name>
</gene>
<organism>
    <name type="scientific">Shewanella putrefaciens (strain CN-32 / ATCC BAA-453)</name>
    <dbReference type="NCBI Taxonomy" id="319224"/>
    <lineage>
        <taxon>Bacteria</taxon>
        <taxon>Pseudomonadati</taxon>
        <taxon>Pseudomonadota</taxon>
        <taxon>Gammaproteobacteria</taxon>
        <taxon>Alteromonadales</taxon>
        <taxon>Shewanellaceae</taxon>
        <taxon>Shewanella</taxon>
    </lineage>
</organism>
<reference key="1">
    <citation type="submission" date="2007-04" db="EMBL/GenBank/DDBJ databases">
        <title>Complete sequence of Shewanella putrefaciens CN-32.</title>
        <authorList>
            <consortium name="US DOE Joint Genome Institute"/>
            <person name="Copeland A."/>
            <person name="Lucas S."/>
            <person name="Lapidus A."/>
            <person name="Barry K."/>
            <person name="Detter J.C."/>
            <person name="Glavina del Rio T."/>
            <person name="Hammon N."/>
            <person name="Israni S."/>
            <person name="Dalin E."/>
            <person name="Tice H."/>
            <person name="Pitluck S."/>
            <person name="Chain P."/>
            <person name="Malfatti S."/>
            <person name="Shin M."/>
            <person name="Vergez L."/>
            <person name="Schmutz J."/>
            <person name="Larimer F."/>
            <person name="Land M."/>
            <person name="Hauser L."/>
            <person name="Kyrpides N."/>
            <person name="Mikhailova N."/>
            <person name="Romine M.F."/>
            <person name="Fredrickson J."/>
            <person name="Tiedje J."/>
            <person name="Richardson P."/>
        </authorList>
    </citation>
    <scope>NUCLEOTIDE SEQUENCE [LARGE SCALE GENOMIC DNA]</scope>
    <source>
        <strain>CN-32 / ATCC BAA-453</strain>
    </source>
</reference>
<dbReference type="EMBL" id="CP000681">
    <property type="protein sequence ID" value="ABP76546.1"/>
    <property type="molecule type" value="Genomic_DNA"/>
</dbReference>
<dbReference type="SMR" id="A4Y9B3"/>
<dbReference type="STRING" id="319224.Sputcn32_2827"/>
<dbReference type="KEGG" id="spc:Sputcn32_2827"/>
<dbReference type="eggNOG" id="COG4108">
    <property type="taxonomic scope" value="Bacteria"/>
</dbReference>
<dbReference type="HOGENOM" id="CLU_002794_2_1_6"/>
<dbReference type="GO" id="GO:0005829">
    <property type="term" value="C:cytosol"/>
    <property type="evidence" value="ECO:0007669"/>
    <property type="project" value="TreeGrafter"/>
</dbReference>
<dbReference type="GO" id="GO:0005525">
    <property type="term" value="F:GTP binding"/>
    <property type="evidence" value="ECO:0007669"/>
    <property type="project" value="UniProtKB-UniRule"/>
</dbReference>
<dbReference type="GO" id="GO:0003924">
    <property type="term" value="F:GTPase activity"/>
    <property type="evidence" value="ECO:0007669"/>
    <property type="project" value="InterPro"/>
</dbReference>
<dbReference type="GO" id="GO:0097216">
    <property type="term" value="F:guanosine tetraphosphate binding"/>
    <property type="evidence" value="ECO:0007669"/>
    <property type="project" value="UniProtKB-ARBA"/>
</dbReference>
<dbReference type="GO" id="GO:0016150">
    <property type="term" value="F:translation release factor activity, codon nonspecific"/>
    <property type="evidence" value="ECO:0007669"/>
    <property type="project" value="TreeGrafter"/>
</dbReference>
<dbReference type="GO" id="GO:0016149">
    <property type="term" value="F:translation release factor activity, codon specific"/>
    <property type="evidence" value="ECO:0007669"/>
    <property type="project" value="UniProtKB-UniRule"/>
</dbReference>
<dbReference type="GO" id="GO:0006449">
    <property type="term" value="P:regulation of translational termination"/>
    <property type="evidence" value="ECO:0007669"/>
    <property type="project" value="UniProtKB-UniRule"/>
</dbReference>
<dbReference type="CDD" id="cd04169">
    <property type="entry name" value="RF3"/>
    <property type="match status" value="1"/>
</dbReference>
<dbReference type="CDD" id="cd03689">
    <property type="entry name" value="RF3_II"/>
    <property type="match status" value="1"/>
</dbReference>
<dbReference type="CDD" id="cd16259">
    <property type="entry name" value="RF3_III"/>
    <property type="match status" value="1"/>
</dbReference>
<dbReference type="FunFam" id="2.40.30.10:FF:000040">
    <property type="entry name" value="Peptide chain release factor 3"/>
    <property type="match status" value="1"/>
</dbReference>
<dbReference type="FunFam" id="3.30.70.3280:FF:000001">
    <property type="entry name" value="Peptide chain release factor 3"/>
    <property type="match status" value="1"/>
</dbReference>
<dbReference type="FunFam" id="3.40.50.300:FF:000542">
    <property type="entry name" value="Peptide chain release factor 3"/>
    <property type="match status" value="1"/>
</dbReference>
<dbReference type="Gene3D" id="3.40.50.300">
    <property type="entry name" value="P-loop containing nucleotide triphosphate hydrolases"/>
    <property type="match status" value="2"/>
</dbReference>
<dbReference type="Gene3D" id="3.30.70.3280">
    <property type="entry name" value="Peptide chain release factor 3, domain III"/>
    <property type="match status" value="1"/>
</dbReference>
<dbReference type="HAMAP" id="MF_00072">
    <property type="entry name" value="Rel_fac_3"/>
    <property type="match status" value="1"/>
</dbReference>
<dbReference type="InterPro" id="IPR053905">
    <property type="entry name" value="EF-G-like_DII"/>
</dbReference>
<dbReference type="InterPro" id="IPR035647">
    <property type="entry name" value="EFG_III/V"/>
</dbReference>
<dbReference type="InterPro" id="IPR031157">
    <property type="entry name" value="G_TR_CS"/>
</dbReference>
<dbReference type="InterPro" id="IPR027417">
    <property type="entry name" value="P-loop_NTPase"/>
</dbReference>
<dbReference type="InterPro" id="IPR004548">
    <property type="entry name" value="PrfC"/>
</dbReference>
<dbReference type="InterPro" id="IPR032090">
    <property type="entry name" value="RF3_C"/>
</dbReference>
<dbReference type="InterPro" id="IPR038467">
    <property type="entry name" value="RF3_dom_3_sf"/>
</dbReference>
<dbReference type="InterPro" id="IPR041732">
    <property type="entry name" value="RF3_GTP-bd"/>
</dbReference>
<dbReference type="InterPro" id="IPR005225">
    <property type="entry name" value="Small_GTP-bd"/>
</dbReference>
<dbReference type="InterPro" id="IPR000795">
    <property type="entry name" value="T_Tr_GTP-bd_dom"/>
</dbReference>
<dbReference type="InterPro" id="IPR009000">
    <property type="entry name" value="Transl_B-barrel_sf"/>
</dbReference>
<dbReference type="NCBIfam" id="TIGR00503">
    <property type="entry name" value="prfC"/>
    <property type="match status" value="1"/>
</dbReference>
<dbReference type="NCBIfam" id="NF001964">
    <property type="entry name" value="PRK00741.1"/>
    <property type="match status" value="1"/>
</dbReference>
<dbReference type="NCBIfam" id="TIGR00231">
    <property type="entry name" value="small_GTP"/>
    <property type="match status" value="1"/>
</dbReference>
<dbReference type="PANTHER" id="PTHR43556">
    <property type="entry name" value="PEPTIDE CHAIN RELEASE FACTOR RF3"/>
    <property type="match status" value="1"/>
</dbReference>
<dbReference type="PANTHER" id="PTHR43556:SF2">
    <property type="entry name" value="PEPTIDE CHAIN RELEASE FACTOR RF3"/>
    <property type="match status" value="1"/>
</dbReference>
<dbReference type="Pfam" id="PF22042">
    <property type="entry name" value="EF-G_D2"/>
    <property type="match status" value="1"/>
</dbReference>
<dbReference type="Pfam" id="PF00009">
    <property type="entry name" value="GTP_EFTU"/>
    <property type="match status" value="1"/>
</dbReference>
<dbReference type="Pfam" id="PF16658">
    <property type="entry name" value="RF3_C"/>
    <property type="match status" value="1"/>
</dbReference>
<dbReference type="PRINTS" id="PR00315">
    <property type="entry name" value="ELONGATNFCT"/>
</dbReference>
<dbReference type="SUPFAM" id="SSF54980">
    <property type="entry name" value="EF-G C-terminal domain-like"/>
    <property type="match status" value="1"/>
</dbReference>
<dbReference type="SUPFAM" id="SSF52540">
    <property type="entry name" value="P-loop containing nucleoside triphosphate hydrolases"/>
    <property type="match status" value="1"/>
</dbReference>
<dbReference type="SUPFAM" id="SSF50447">
    <property type="entry name" value="Translation proteins"/>
    <property type="match status" value="1"/>
</dbReference>
<dbReference type="PROSITE" id="PS00301">
    <property type="entry name" value="G_TR_1"/>
    <property type="match status" value="1"/>
</dbReference>
<dbReference type="PROSITE" id="PS51722">
    <property type="entry name" value="G_TR_2"/>
    <property type="match status" value="1"/>
</dbReference>
<protein>
    <recommendedName>
        <fullName evidence="1">Peptide chain release factor 3</fullName>
        <shortName evidence="1">RF-3</shortName>
    </recommendedName>
</protein>
<sequence length="526" mass="59271">MSGNKVEVDKRRTFAIISHPDAGKTTITEKVLLFGNALQKAGTVKGKKSGQHAKSDWMEMEKDRGISITTSVMQFPYGGALVNLLDTPGHEDFSEDTYRTLTAVDSCLMVIDSAKGVEDRTIKLMEVTRLRDTPIVTFMNKLDRDIRDPIDLMDEVENVLNIACAPITWPIGSGKEFKGVYHILRDEVVLYQSGMGHTIQERRVIEGINNPDLDKAIGSYAADLRDEMELVRGASNEFDHAAFLKGELTPVFFGTALGNFGVDHILDGIVEWAPKPLPRESDTRVIMPDEEKFTGFVFKIQANMDPKHRDRVAFMRVCSGRYEQGMKMHHVRIGKDVNVSDALTFMAGDRERAEEAYPGDIIGLHNHGTIRIGDTFTQGEKFRFTGVPNFAPEMFRRIRLRDPLKQKQLLKGLVQLSEEGAVQVFRPLDTNDLIVGAVGVLQFEVVVGRLKSEYNVEAIYEGISVSTARWVYCKDERKLEEFRRKCSQNLALDGGDNLTYIAPTMVNLNLSMERYPDIEFAKTREH</sequence>
<name>RF3_SHEPC</name>